<sequence length="81" mass="8800">MAHTVKIYDTCIGCTQCVRACPTDVLEMVPWDGCKAGQIASSPRTEDCVGCKRCETACPTDFLSIRVYLGAETTRSMGLAY</sequence>
<dbReference type="EC" id="1.97.1.12"/>
<dbReference type="EMBL" id="D00590">
    <property type="protein sequence ID" value="BAA00468.1"/>
    <property type="molecule type" value="Genomic_DNA"/>
</dbReference>
<dbReference type="PDB" id="6K33">
    <property type="method" value="EM"/>
    <property type="resolution" value="2.74 A"/>
    <property type="chains" value="aC/bC/cC=2-81"/>
</dbReference>
<dbReference type="PDBsum" id="6K33"/>
<dbReference type="EMDB" id="EMD-9908"/>
<dbReference type="SMR" id="P0A417"/>
<dbReference type="GO" id="GO:0009522">
    <property type="term" value="C:photosystem I"/>
    <property type="evidence" value="ECO:0007669"/>
    <property type="project" value="UniProtKB-KW"/>
</dbReference>
<dbReference type="GO" id="GO:0031676">
    <property type="term" value="C:plasma membrane-derived thylakoid membrane"/>
    <property type="evidence" value="ECO:0007669"/>
    <property type="project" value="UniProtKB-SubCell"/>
</dbReference>
<dbReference type="GO" id="GO:0051539">
    <property type="term" value="F:4 iron, 4 sulfur cluster binding"/>
    <property type="evidence" value="ECO:0007669"/>
    <property type="project" value="UniProtKB-KW"/>
</dbReference>
<dbReference type="GO" id="GO:0009055">
    <property type="term" value="F:electron transfer activity"/>
    <property type="evidence" value="ECO:0007669"/>
    <property type="project" value="UniProtKB-UniRule"/>
</dbReference>
<dbReference type="GO" id="GO:0046872">
    <property type="term" value="F:metal ion binding"/>
    <property type="evidence" value="ECO:0007669"/>
    <property type="project" value="UniProtKB-KW"/>
</dbReference>
<dbReference type="GO" id="GO:0016491">
    <property type="term" value="F:oxidoreductase activity"/>
    <property type="evidence" value="ECO:0007669"/>
    <property type="project" value="UniProtKB-KW"/>
</dbReference>
<dbReference type="GO" id="GO:0009773">
    <property type="term" value="P:photosynthetic electron transport in photosystem I"/>
    <property type="evidence" value="ECO:0007669"/>
    <property type="project" value="InterPro"/>
</dbReference>
<dbReference type="FunFam" id="3.30.70.20:FF:000001">
    <property type="entry name" value="Photosystem I iron-sulfur center"/>
    <property type="match status" value="1"/>
</dbReference>
<dbReference type="Gene3D" id="3.30.70.20">
    <property type="match status" value="1"/>
</dbReference>
<dbReference type="HAMAP" id="MF_01303">
    <property type="entry name" value="PSI_PsaC"/>
    <property type="match status" value="1"/>
</dbReference>
<dbReference type="InterPro" id="IPR017896">
    <property type="entry name" value="4Fe4S_Fe-S-bd"/>
</dbReference>
<dbReference type="InterPro" id="IPR017900">
    <property type="entry name" value="4Fe4S_Fe_S_CS"/>
</dbReference>
<dbReference type="InterPro" id="IPR050157">
    <property type="entry name" value="PSI_iron-sulfur_center"/>
</dbReference>
<dbReference type="InterPro" id="IPR017491">
    <property type="entry name" value="PSI_PsaC"/>
</dbReference>
<dbReference type="NCBIfam" id="TIGR03048">
    <property type="entry name" value="PS_I_psaC"/>
    <property type="match status" value="1"/>
</dbReference>
<dbReference type="PANTHER" id="PTHR24960:SF79">
    <property type="entry name" value="PHOTOSYSTEM I IRON-SULFUR CENTER"/>
    <property type="match status" value="1"/>
</dbReference>
<dbReference type="PANTHER" id="PTHR24960">
    <property type="entry name" value="PHOTOSYSTEM I IRON-SULFUR CENTER-RELATED"/>
    <property type="match status" value="1"/>
</dbReference>
<dbReference type="Pfam" id="PF12838">
    <property type="entry name" value="Fer4_7"/>
    <property type="match status" value="1"/>
</dbReference>
<dbReference type="SUPFAM" id="SSF54862">
    <property type="entry name" value="4Fe-4S ferredoxins"/>
    <property type="match status" value="1"/>
</dbReference>
<dbReference type="PROSITE" id="PS00198">
    <property type="entry name" value="4FE4S_FER_1"/>
    <property type="match status" value="2"/>
</dbReference>
<dbReference type="PROSITE" id="PS51379">
    <property type="entry name" value="4FE4S_FER_2"/>
    <property type="match status" value="2"/>
</dbReference>
<accession>P0A417</accession>
<accession>P18083</accession>
<accession>P20451</accession>
<organism>
    <name type="scientific">Thermostichus vulcanus</name>
    <name type="common">Synechococcus vulcanus</name>
    <dbReference type="NCBI Taxonomy" id="32053"/>
    <lineage>
        <taxon>Bacteria</taxon>
        <taxon>Bacillati</taxon>
        <taxon>Cyanobacteriota</taxon>
        <taxon>Cyanophyceae</taxon>
        <taxon>Thermostichales</taxon>
        <taxon>Thermostichaceae</taxon>
        <taxon>Thermostichus</taxon>
    </lineage>
</organism>
<evidence type="ECO:0000250" key="1"/>
<evidence type="ECO:0000269" key="2">
    <source>
    </source>
</evidence>
<keyword id="KW-0002">3D-structure</keyword>
<keyword id="KW-0004">4Fe-4S</keyword>
<keyword id="KW-0903">Direct protein sequencing</keyword>
<keyword id="KW-0249">Electron transport</keyword>
<keyword id="KW-0408">Iron</keyword>
<keyword id="KW-0411">Iron-sulfur</keyword>
<keyword id="KW-0472">Membrane</keyword>
<keyword id="KW-0479">Metal-binding</keyword>
<keyword id="KW-0560">Oxidoreductase</keyword>
<keyword id="KW-0602">Photosynthesis</keyword>
<keyword id="KW-0603">Photosystem I</keyword>
<keyword id="KW-0677">Repeat</keyword>
<keyword id="KW-0793">Thylakoid</keyword>
<keyword id="KW-0813">Transport</keyword>
<protein>
    <recommendedName>
        <fullName>Photosystem I iron-sulfur center</fullName>
        <ecNumber>1.97.1.12</ecNumber>
    </recommendedName>
    <alternativeName>
        <fullName>9 kDa polypeptide</fullName>
    </alternativeName>
    <alternativeName>
        <fullName>PSI-C</fullName>
    </alternativeName>
    <alternativeName>
        <fullName>Photosystem I subunit VII</fullName>
    </alternativeName>
    <alternativeName>
        <fullName>PsaC</fullName>
    </alternativeName>
</protein>
<gene>
    <name type="primary">psaC</name>
</gene>
<name>PSAC_THEVL</name>
<proteinExistence type="evidence at protein level"/>
<comment type="function">
    <text evidence="1">Apoprotein for the two 4Fe-4S centers FA and FB of photosystem I (PSI); essential for photochemical activity. FB is the terminal electron acceptor of PSI, donating electrons to ferredoxin. The C-terminus interacts with PsaA/B/D and helps assemble the protein into the PSI complex. Required for binding of PsaD and PsaE to PSI. PSI is a plastocyanin/cytochrome c6-ferredoxin oxidoreductase, converting photonic excitation into a charge separation, which transfers an electron from the donor P700 chlorophyll pair to the spectroscopically characterized acceptors A0, A1, FX, FA and FB in turn (By similarity).</text>
</comment>
<comment type="catalytic activity">
    <reaction>
        <text>reduced [plastocyanin] + hnu + oxidized [2Fe-2S]-[ferredoxin] = oxidized [plastocyanin] + reduced [2Fe-2S]-[ferredoxin]</text>
        <dbReference type="Rhea" id="RHEA:30407"/>
        <dbReference type="Rhea" id="RHEA-COMP:10000"/>
        <dbReference type="Rhea" id="RHEA-COMP:10001"/>
        <dbReference type="Rhea" id="RHEA-COMP:10039"/>
        <dbReference type="Rhea" id="RHEA-COMP:10040"/>
        <dbReference type="ChEBI" id="CHEBI:29036"/>
        <dbReference type="ChEBI" id="CHEBI:30212"/>
        <dbReference type="ChEBI" id="CHEBI:33737"/>
        <dbReference type="ChEBI" id="CHEBI:33738"/>
        <dbReference type="ChEBI" id="CHEBI:49552"/>
        <dbReference type="EC" id="1.97.1.12"/>
    </reaction>
</comment>
<comment type="cofactor">
    <cofactor evidence="1">
        <name>[4Fe-4S] cluster</name>
        <dbReference type="ChEBI" id="CHEBI:49883"/>
    </cofactor>
    <text evidence="1">Binds 2 [4Fe-4S] clusters. Cluster 2 is most probably the spectroscopically characterized electron acceptor FA and cluster 1 is most probably FB.</text>
</comment>
<comment type="subunit">
    <text evidence="1">The cyanobacterial PSI reaction center is composed of one copy each of PsaA,B,C,D,E,F,I,J,K,L,M and X, and forms trimeric complexes.</text>
</comment>
<comment type="subcellular location">
    <subcellularLocation>
        <location evidence="1">Cellular thylakoid membrane</location>
        <topology evidence="1">Peripheral membrane protein</topology>
        <orientation evidence="1">Cytoplasmic side</orientation>
    </subcellularLocation>
</comment>
<feature type="initiator methionine" description="Removed" evidence="2">
    <location>
        <position position="1"/>
    </location>
</feature>
<feature type="chain" id="PRO_0000062020" description="Photosystem I iron-sulfur center">
    <location>
        <begin position="2"/>
        <end position="81"/>
    </location>
</feature>
<feature type="domain" description="4Fe-4S ferredoxin-type 1">
    <location>
        <begin position="2"/>
        <end position="31"/>
    </location>
</feature>
<feature type="domain" description="4Fe-4S ferredoxin-type 2">
    <location>
        <begin position="37"/>
        <end position="68"/>
    </location>
</feature>
<feature type="binding site" evidence="1">
    <location>
        <position position="11"/>
    </location>
    <ligand>
        <name>[4Fe-4S] cluster</name>
        <dbReference type="ChEBI" id="CHEBI:49883"/>
        <label>1</label>
    </ligand>
</feature>
<feature type="binding site" evidence="1">
    <location>
        <position position="14"/>
    </location>
    <ligand>
        <name>[4Fe-4S] cluster</name>
        <dbReference type="ChEBI" id="CHEBI:49883"/>
        <label>1</label>
    </ligand>
</feature>
<feature type="binding site" evidence="1">
    <location>
        <position position="17"/>
    </location>
    <ligand>
        <name>[4Fe-4S] cluster</name>
        <dbReference type="ChEBI" id="CHEBI:49883"/>
        <label>1</label>
    </ligand>
</feature>
<feature type="binding site" evidence="1">
    <location>
        <position position="21"/>
    </location>
    <ligand>
        <name>[4Fe-4S] cluster</name>
        <dbReference type="ChEBI" id="CHEBI:49883"/>
        <label>2</label>
    </ligand>
</feature>
<feature type="binding site" evidence="1">
    <location>
        <position position="48"/>
    </location>
    <ligand>
        <name>[4Fe-4S] cluster</name>
        <dbReference type="ChEBI" id="CHEBI:49883"/>
        <label>2</label>
    </ligand>
</feature>
<feature type="binding site" evidence="1">
    <location>
        <position position="51"/>
    </location>
    <ligand>
        <name>[4Fe-4S] cluster</name>
        <dbReference type="ChEBI" id="CHEBI:49883"/>
        <label>2</label>
    </ligand>
</feature>
<feature type="binding site" evidence="1">
    <location>
        <position position="54"/>
    </location>
    <ligand>
        <name>[4Fe-4S] cluster</name>
        <dbReference type="ChEBI" id="CHEBI:49883"/>
        <label>2</label>
    </ligand>
</feature>
<feature type="binding site" evidence="1">
    <location>
        <position position="58"/>
    </location>
    <ligand>
        <name>[4Fe-4S] cluster</name>
        <dbReference type="ChEBI" id="CHEBI:49883"/>
        <label>1</label>
    </ligand>
</feature>
<reference key="1">
    <citation type="journal article" date="1990" name="Nucleic Acids Res.">
        <title>Nucleotide sequence of the psaC gene of the cyanobacterium Synechococcus vulcanus.</title>
        <authorList>
            <person name="Shimizu T."/>
            <person name="Hiyama T."/>
            <person name="Ikeuchi M."/>
            <person name="Koike H."/>
            <person name="Inoue Y."/>
        </authorList>
    </citation>
    <scope>NUCLEOTIDE SEQUENCE [GENOMIC DNA]</scope>
</reference>
<reference key="2">
    <citation type="journal article" date="1989" name="FEBS Lett.">
        <title>Identification of photosystem I components from the cyanobacterium, Synechococcus vulcanus by N-terminal sequencing.</title>
        <authorList>
            <person name="Koike H."/>
            <person name="Ikeuchi M."/>
            <person name="Hiyama T."/>
            <person name="Inoue Y."/>
        </authorList>
    </citation>
    <scope>PROTEIN SEQUENCE OF 2-32</scope>
</reference>